<proteinExistence type="inferred from homology"/>
<keyword id="KW-0067">ATP-binding</keyword>
<keyword id="KW-0963">Cytoplasm</keyword>
<keyword id="KW-0418">Kinase</keyword>
<keyword id="KW-0460">Magnesium</keyword>
<keyword id="KW-0479">Metal-binding</keyword>
<keyword id="KW-0545">Nucleotide biosynthesis</keyword>
<keyword id="KW-0547">Nucleotide-binding</keyword>
<keyword id="KW-0808">Transferase</keyword>
<organism>
    <name type="scientific">Staphylococcus haemolyticus (strain JCSC1435)</name>
    <dbReference type="NCBI Taxonomy" id="279808"/>
    <lineage>
        <taxon>Bacteria</taxon>
        <taxon>Bacillati</taxon>
        <taxon>Bacillota</taxon>
        <taxon>Bacilli</taxon>
        <taxon>Bacillales</taxon>
        <taxon>Staphylococcaceae</taxon>
        <taxon>Staphylococcus</taxon>
    </lineage>
</organism>
<sequence length="321" mass="35208">MLNNEYKNSSLKIFSLKGNEPLAQEVADRVGIELGKCSVKRFSDGEIQINIEESIRGCDVFIIQPTSNPVNLHLMELLIMIDACKRASAANINIVVPYYGYARQDRKARSREPITAKLVANLIETAGANRMIALDLHAPQIQGFFDIPIDHLMGVPIIGQHFENDPNIDPEECVVVSPDHGGVTRARKLADILKTPIAIIDKRRPKPNVAEVMNIVGEIEGRTAIIIDDIIDTAGTITLAAQALKDKGAKDVYACCTHPVLSGPAKERIENSAIKELIVTNSILLDDTRKPSNTKELSVAGLLAQAIIRVYERESVSVLFD</sequence>
<reference key="1">
    <citation type="journal article" date="2005" name="J. Bacteriol.">
        <title>Whole-genome sequencing of Staphylococcus haemolyticus uncovers the extreme plasticity of its genome and the evolution of human-colonizing staphylococcal species.</title>
        <authorList>
            <person name="Takeuchi F."/>
            <person name="Watanabe S."/>
            <person name="Baba T."/>
            <person name="Yuzawa H."/>
            <person name="Ito T."/>
            <person name="Morimoto Y."/>
            <person name="Kuroda M."/>
            <person name="Cui L."/>
            <person name="Takahashi M."/>
            <person name="Ankai A."/>
            <person name="Baba S."/>
            <person name="Fukui S."/>
            <person name="Lee J.C."/>
            <person name="Hiramatsu K."/>
        </authorList>
    </citation>
    <scope>NUCLEOTIDE SEQUENCE [LARGE SCALE GENOMIC DNA]</scope>
    <source>
        <strain>JCSC1435</strain>
    </source>
</reference>
<feature type="chain" id="PRO_0000141194" description="Ribose-phosphate pyrophosphokinase">
    <location>
        <begin position="1"/>
        <end position="321"/>
    </location>
</feature>
<feature type="active site" evidence="1">
    <location>
        <position position="202"/>
    </location>
</feature>
<feature type="binding site" evidence="1">
    <location>
        <begin position="44"/>
        <end position="46"/>
    </location>
    <ligand>
        <name>ATP</name>
        <dbReference type="ChEBI" id="CHEBI:30616"/>
    </ligand>
</feature>
<feature type="binding site" evidence="1">
    <location>
        <begin position="103"/>
        <end position="104"/>
    </location>
    <ligand>
        <name>ATP</name>
        <dbReference type="ChEBI" id="CHEBI:30616"/>
    </ligand>
</feature>
<feature type="binding site" evidence="1">
    <location>
        <position position="137"/>
    </location>
    <ligand>
        <name>Mg(2+)</name>
        <dbReference type="ChEBI" id="CHEBI:18420"/>
        <label>1</label>
    </ligand>
</feature>
<feature type="binding site" evidence="1">
    <location>
        <position position="179"/>
    </location>
    <ligand>
        <name>Mg(2+)</name>
        <dbReference type="ChEBI" id="CHEBI:18420"/>
        <label>2</label>
    </ligand>
</feature>
<feature type="binding site" evidence="1">
    <location>
        <position position="204"/>
    </location>
    <ligand>
        <name>D-ribose 5-phosphate</name>
        <dbReference type="ChEBI" id="CHEBI:78346"/>
    </ligand>
</feature>
<feature type="binding site" evidence="1">
    <location>
        <position position="228"/>
    </location>
    <ligand>
        <name>D-ribose 5-phosphate</name>
        <dbReference type="ChEBI" id="CHEBI:78346"/>
    </ligand>
</feature>
<feature type="binding site" evidence="1">
    <location>
        <begin position="232"/>
        <end position="236"/>
    </location>
    <ligand>
        <name>D-ribose 5-phosphate</name>
        <dbReference type="ChEBI" id="CHEBI:78346"/>
    </ligand>
</feature>
<protein>
    <recommendedName>
        <fullName evidence="1">Ribose-phosphate pyrophosphokinase</fullName>
        <shortName evidence="1">RPPK</shortName>
        <ecNumber evidence="1">2.7.6.1</ecNumber>
    </recommendedName>
    <alternativeName>
        <fullName evidence="1">5-phospho-D-ribosyl alpha-1-diphosphate synthase</fullName>
    </alternativeName>
    <alternativeName>
        <fullName evidence="1">Phosphoribosyl diphosphate synthase</fullName>
    </alternativeName>
    <alternativeName>
        <fullName evidence="1">Phosphoribosyl pyrophosphate synthase</fullName>
        <shortName evidence="1">P-Rib-PP synthase</shortName>
        <shortName evidence="1">PRPP synthase</shortName>
        <shortName evidence="1">PRPPase</shortName>
    </alternativeName>
</protein>
<gene>
    <name evidence="1" type="primary">prs</name>
    <name type="ordered locus">SH2511</name>
</gene>
<accession>Q4L3F7</accession>
<comment type="function">
    <text evidence="1">Involved in the biosynthesis of the central metabolite phospho-alpha-D-ribosyl-1-pyrophosphate (PRPP) via the transfer of pyrophosphoryl group from ATP to 1-hydroxyl of ribose-5-phosphate (Rib-5-P).</text>
</comment>
<comment type="catalytic activity">
    <reaction evidence="1">
        <text>D-ribose 5-phosphate + ATP = 5-phospho-alpha-D-ribose 1-diphosphate + AMP + H(+)</text>
        <dbReference type="Rhea" id="RHEA:15609"/>
        <dbReference type="ChEBI" id="CHEBI:15378"/>
        <dbReference type="ChEBI" id="CHEBI:30616"/>
        <dbReference type="ChEBI" id="CHEBI:58017"/>
        <dbReference type="ChEBI" id="CHEBI:78346"/>
        <dbReference type="ChEBI" id="CHEBI:456215"/>
        <dbReference type="EC" id="2.7.6.1"/>
    </reaction>
</comment>
<comment type="cofactor">
    <cofactor evidence="1">
        <name>Mg(2+)</name>
        <dbReference type="ChEBI" id="CHEBI:18420"/>
    </cofactor>
    <text evidence="1">Binds 2 Mg(2+) ions per subunit.</text>
</comment>
<comment type="pathway">
    <text evidence="1">Metabolic intermediate biosynthesis; 5-phospho-alpha-D-ribose 1-diphosphate biosynthesis; 5-phospho-alpha-D-ribose 1-diphosphate from D-ribose 5-phosphate (route I): step 1/1.</text>
</comment>
<comment type="subunit">
    <text evidence="1">Homohexamer.</text>
</comment>
<comment type="subcellular location">
    <subcellularLocation>
        <location evidence="1">Cytoplasm</location>
    </subcellularLocation>
</comment>
<comment type="similarity">
    <text evidence="1">Belongs to the ribose-phosphate pyrophosphokinase family. Class I subfamily.</text>
</comment>
<name>KPRS_STAHJ</name>
<evidence type="ECO:0000255" key="1">
    <source>
        <dbReference type="HAMAP-Rule" id="MF_00583"/>
    </source>
</evidence>
<dbReference type="EC" id="2.7.6.1" evidence="1"/>
<dbReference type="EMBL" id="AP006716">
    <property type="protein sequence ID" value="BAE05820.1"/>
    <property type="molecule type" value="Genomic_DNA"/>
</dbReference>
<dbReference type="RefSeq" id="WP_011276761.1">
    <property type="nucleotide sequence ID" value="NC_007168.1"/>
</dbReference>
<dbReference type="SMR" id="Q4L3F7"/>
<dbReference type="KEGG" id="sha:SH2511"/>
<dbReference type="eggNOG" id="COG0462">
    <property type="taxonomic scope" value="Bacteria"/>
</dbReference>
<dbReference type="HOGENOM" id="CLU_033546_1_0_9"/>
<dbReference type="OrthoDB" id="9777067at2"/>
<dbReference type="UniPathway" id="UPA00087">
    <property type="reaction ID" value="UER00172"/>
</dbReference>
<dbReference type="Proteomes" id="UP000000543">
    <property type="component" value="Chromosome"/>
</dbReference>
<dbReference type="GO" id="GO:0005737">
    <property type="term" value="C:cytoplasm"/>
    <property type="evidence" value="ECO:0007669"/>
    <property type="project" value="UniProtKB-SubCell"/>
</dbReference>
<dbReference type="GO" id="GO:0002189">
    <property type="term" value="C:ribose phosphate diphosphokinase complex"/>
    <property type="evidence" value="ECO:0007669"/>
    <property type="project" value="TreeGrafter"/>
</dbReference>
<dbReference type="GO" id="GO:0005524">
    <property type="term" value="F:ATP binding"/>
    <property type="evidence" value="ECO:0007669"/>
    <property type="project" value="UniProtKB-KW"/>
</dbReference>
<dbReference type="GO" id="GO:0016301">
    <property type="term" value="F:kinase activity"/>
    <property type="evidence" value="ECO:0007669"/>
    <property type="project" value="UniProtKB-KW"/>
</dbReference>
<dbReference type="GO" id="GO:0000287">
    <property type="term" value="F:magnesium ion binding"/>
    <property type="evidence" value="ECO:0007669"/>
    <property type="project" value="UniProtKB-UniRule"/>
</dbReference>
<dbReference type="GO" id="GO:0004749">
    <property type="term" value="F:ribose phosphate diphosphokinase activity"/>
    <property type="evidence" value="ECO:0007669"/>
    <property type="project" value="UniProtKB-UniRule"/>
</dbReference>
<dbReference type="GO" id="GO:0006015">
    <property type="term" value="P:5-phosphoribose 1-diphosphate biosynthetic process"/>
    <property type="evidence" value="ECO:0007669"/>
    <property type="project" value="UniProtKB-UniRule"/>
</dbReference>
<dbReference type="GO" id="GO:0006164">
    <property type="term" value="P:purine nucleotide biosynthetic process"/>
    <property type="evidence" value="ECO:0007669"/>
    <property type="project" value="TreeGrafter"/>
</dbReference>
<dbReference type="GO" id="GO:0009156">
    <property type="term" value="P:ribonucleoside monophosphate biosynthetic process"/>
    <property type="evidence" value="ECO:0007669"/>
    <property type="project" value="InterPro"/>
</dbReference>
<dbReference type="CDD" id="cd06223">
    <property type="entry name" value="PRTases_typeI"/>
    <property type="match status" value="1"/>
</dbReference>
<dbReference type="FunFam" id="3.40.50.2020:FF:000001">
    <property type="entry name" value="Ribose-phosphate pyrophosphokinase"/>
    <property type="match status" value="1"/>
</dbReference>
<dbReference type="FunFam" id="3.40.50.2020:FF:000002">
    <property type="entry name" value="Ribose-phosphate pyrophosphokinase"/>
    <property type="match status" value="1"/>
</dbReference>
<dbReference type="Gene3D" id="3.40.50.2020">
    <property type="match status" value="2"/>
</dbReference>
<dbReference type="HAMAP" id="MF_00583_B">
    <property type="entry name" value="RibP_PPkinase_B"/>
    <property type="match status" value="1"/>
</dbReference>
<dbReference type="InterPro" id="IPR000842">
    <property type="entry name" value="PRib_PP_synth_CS"/>
</dbReference>
<dbReference type="InterPro" id="IPR029099">
    <property type="entry name" value="Pribosyltran_N"/>
</dbReference>
<dbReference type="InterPro" id="IPR000836">
    <property type="entry name" value="PRibTrfase_dom"/>
</dbReference>
<dbReference type="InterPro" id="IPR029057">
    <property type="entry name" value="PRTase-like"/>
</dbReference>
<dbReference type="InterPro" id="IPR005946">
    <property type="entry name" value="Rib-P_diPkinase"/>
</dbReference>
<dbReference type="InterPro" id="IPR037515">
    <property type="entry name" value="Rib-P_diPkinase_bac"/>
</dbReference>
<dbReference type="NCBIfam" id="NF002320">
    <property type="entry name" value="PRK01259.1"/>
    <property type="match status" value="1"/>
</dbReference>
<dbReference type="NCBIfam" id="NF002618">
    <property type="entry name" value="PRK02269.1"/>
    <property type="match status" value="1"/>
</dbReference>
<dbReference type="NCBIfam" id="TIGR01251">
    <property type="entry name" value="ribP_PPkin"/>
    <property type="match status" value="1"/>
</dbReference>
<dbReference type="PANTHER" id="PTHR10210">
    <property type="entry name" value="RIBOSE-PHOSPHATE DIPHOSPHOKINASE FAMILY MEMBER"/>
    <property type="match status" value="1"/>
</dbReference>
<dbReference type="PANTHER" id="PTHR10210:SF41">
    <property type="entry name" value="RIBOSE-PHOSPHATE PYROPHOSPHOKINASE 1, CHLOROPLASTIC"/>
    <property type="match status" value="1"/>
</dbReference>
<dbReference type="Pfam" id="PF14572">
    <property type="entry name" value="Pribosyl_synth"/>
    <property type="match status" value="1"/>
</dbReference>
<dbReference type="Pfam" id="PF13793">
    <property type="entry name" value="Pribosyltran_N"/>
    <property type="match status" value="1"/>
</dbReference>
<dbReference type="SMART" id="SM01400">
    <property type="entry name" value="Pribosyltran_N"/>
    <property type="match status" value="1"/>
</dbReference>
<dbReference type="SUPFAM" id="SSF53271">
    <property type="entry name" value="PRTase-like"/>
    <property type="match status" value="1"/>
</dbReference>
<dbReference type="PROSITE" id="PS00114">
    <property type="entry name" value="PRPP_SYNTHASE"/>
    <property type="match status" value="1"/>
</dbReference>